<proteinExistence type="inferred from homology"/>
<gene>
    <name type="ordered locus">LMHCC_0955</name>
</gene>
<evidence type="ECO:0000255" key="1">
    <source>
        <dbReference type="HAMAP-Rule" id="MF_01548"/>
    </source>
</evidence>
<name>Y955_LISMH</name>
<comment type="similarity">
    <text evidence="1">Belongs to the UPF0354 family.</text>
</comment>
<feature type="chain" id="PRO_1000185308" description="UPF0354 protein LMHCC_0955">
    <location>
        <begin position="1"/>
        <end position="266"/>
    </location>
</feature>
<protein>
    <recommendedName>
        <fullName evidence="1">UPF0354 protein LMHCC_0955</fullName>
    </recommendedName>
</protein>
<reference key="1">
    <citation type="journal article" date="2011" name="J. Bacteriol.">
        <title>Genome sequence of lineage III Listeria monocytogenes strain HCC23.</title>
        <authorList>
            <person name="Steele C.L."/>
            <person name="Donaldson J.R."/>
            <person name="Paul D."/>
            <person name="Banes M.M."/>
            <person name="Arick T."/>
            <person name="Bridges S.M."/>
            <person name="Lawrence M.L."/>
        </authorList>
    </citation>
    <scope>NUCLEOTIDE SEQUENCE [LARGE SCALE GENOMIC DNA]</scope>
    <source>
        <strain>HCC23</strain>
    </source>
</reference>
<accession>B8DHD4</accession>
<dbReference type="EMBL" id="CP001175">
    <property type="protein sequence ID" value="ACK39303.1"/>
    <property type="molecule type" value="Genomic_DNA"/>
</dbReference>
<dbReference type="RefSeq" id="WP_012581237.1">
    <property type="nucleotide sequence ID" value="NC_011660.1"/>
</dbReference>
<dbReference type="KEGG" id="lmh:LMHCC_0955"/>
<dbReference type="HOGENOM" id="CLU_085634_0_0_9"/>
<dbReference type="HAMAP" id="MF_01548">
    <property type="entry name" value="UPF0354"/>
    <property type="match status" value="1"/>
</dbReference>
<dbReference type="InterPro" id="IPR010838">
    <property type="entry name" value="DUF1444"/>
</dbReference>
<dbReference type="NCBIfam" id="NF010189">
    <property type="entry name" value="PRK13668.1"/>
    <property type="match status" value="1"/>
</dbReference>
<dbReference type="Pfam" id="PF07285">
    <property type="entry name" value="DUF1444"/>
    <property type="match status" value="1"/>
</dbReference>
<dbReference type="PIRSF" id="PIRSF012562">
    <property type="entry name" value="UCP012562"/>
    <property type="match status" value="1"/>
</dbReference>
<sequence>MAKMTILKMKARLEKELDAPNRQFAYNRDNDTLSVTQNGKKVTLTIPQIVANYENDGDAAVEKIVYYVEEGFRAAAGNVELKNNQANIYPVVRATSFPSKTKAGEVLLTDEHTAETKIFYAFDLGKSYRFIEEGMLEKAQLTHKEIREAAFRNLANLAIPLKKDAVNGNDFYFVRTNDGYDASRLLNEAFLREMREKITGEMVLAVPHQDVLIIGDIQDNTGYDVLAHMTMDFFADGLVPITSLPFVYNNGKLEPIFIMAKNRLKE</sequence>
<organism>
    <name type="scientific">Listeria monocytogenes serotype 4a (strain HCC23)</name>
    <dbReference type="NCBI Taxonomy" id="552536"/>
    <lineage>
        <taxon>Bacteria</taxon>
        <taxon>Bacillati</taxon>
        <taxon>Bacillota</taxon>
        <taxon>Bacilli</taxon>
        <taxon>Bacillales</taxon>
        <taxon>Listeriaceae</taxon>
        <taxon>Listeria</taxon>
    </lineage>
</organism>